<name>FLHE_SALTI</name>
<protein>
    <recommendedName>
        <fullName>Flagellar protein FlhE</fullName>
    </recommendedName>
</protein>
<feature type="signal peptide" evidence="1">
    <location>
        <begin position="1"/>
        <end position="16"/>
    </location>
</feature>
<feature type="chain" id="PRO_0000009348" description="Flagellar protein FlhE">
    <location>
        <begin position="17"/>
        <end position="130"/>
    </location>
</feature>
<sequence>MRKWLALLLFPLTVQAAGEGAWQDSGMGVTLNYRGVSASSSPLSARQPVSGVMTLVAWRYELNGPTPAGLRVRLCSQSRCVELDGQSGTTHGFAHVPAVEPLRFVWEVPGGGRLIPALKVRSNQVIVNYR</sequence>
<comment type="function">
    <text evidence="1">Not essential for flagellar formation and function.</text>
</comment>
<gene>
    <name type="primary">flhE</name>
    <name type="ordered locus">STY2121</name>
    <name type="ordered locus">t0965</name>
</gene>
<accession>P0A1N5</accession>
<accession>P40728</accession>
<keyword id="KW-1005">Bacterial flagellum biogenesis</keyword>
<keyword id="KW-0732">Signal</keyword>
<dbReference type="EMBL" id="AL513382">
    <property type="protein sequence ID" value="CAD05663.1"/>
    <property type="molecule type" value="Genomic_DNA"/>
</dbReference>
<dbReference type="EMBL" id="AE014613">
    <property type="protein sequence ID" value="AAO68638.1"/>
    <property type="molecule type" value="Genomic_DNA"/>
</dbReference>
<dbReference type="RefSeq" id="NP_456478.1">
    <property type="nucleotide sequence ID" value="NC_003198.1"/>
</dbReference>
<dbReference type="RefSeq" id="WP_001233619.1">
    <property type="nucleotide sequence ID" value="NZ_WSUR01000004.1"/>
</dbReference>
<dbReference type="SMR" id="P0A1N5"/>
<dbReference type="STRING" id="220341.gene:17586028"/>
<dbReference type="KEGG" id="stt:t0965"/>
<dbReference type="KEGG" id="sty:STY2121"/>
<dbReference type="PATRIC" id="fig|220341.7.peg.2132"/>
<dbReference type="eggNOG" id="ENOG502ZRXW">
    <property type="taxonomic scope" value="Bacteria"/>
</dbReference>
<dbReference type="HOGENOM" id="CLU_140250_0_0_6"/>
<dbReference type="OMA" id="NEFRFVY"/>
<dbReference type="OrthoDB" id="6521367at2"/>
<dbReference type="Proteomes" id="UP000000541">
    <property type="component" value="Chromosome"/>
</dbReference>
<dbReference type="Proteomes" id="UP000002670">
    <property type="component" value="Chromosome"/>
</dbReference>
<dbReference type="GO" id="GO:0044781">
    <property type="term" value="P:bacterial-type flagellum organization"/>
    <property type="evidence" value="ECO:0007669"/>
    <property type="project" value="UniProtKB-KW"/>
</dbReference>
<dbReference type="InterPro" id="IPR009420">
    <property type="entry name" value="FlhE"/>
</dbReference>
<dbReference type="Pfam" id="PF06366">
    <property type="entry name" value="FlhE"/>
    <property type="match status" value="1"/>
</dbReference>
<organism>
    <name type="scientific">Salmonella typhi</name>
    <dbReference type="NCBI Taxonomy" id="90370"/>
    <lineage>
        <taxon>Bacteria</taxon>
        <taxon>Pseudomonadati</taxon>
        <taxon>Pseudomonadota</taxon>
        <taxon>Gammaproteobacteria</taxon>
        <taxon>Enterobacterales</taxon>
        <taxon>Enterobacteriaceae</taxon>
        <taxon>Salmonella</taxon>
    </lineage>
</organism>
<proteinExistence type="inferred from homology"/>
<reference key="1">
    <citation type="journal article" date="2001" name="Nature">
        <title>Complete genome sequence of a multiple drug resistant Salmonella enterica serovar Typhi CT18.</title>
        <authorList>
            <person name="Parkhill J."/>
            <person name="Dougan G."/>
            <person name="James K.D."/>
            <person name="Thomson N.R."/>
            <person name="Pickard D."/>
            <person name="Wain J."/>
            <person name="Churcher C.M."/>
            <person name="Mungall K.L."/>
            <person name="Bentley S.D."/>
            <person name="Holden M.T.G."/>
            <person name="Sebaihia M."/>
            <person name="Baker S."/>
            <person name="Basham D."/>
            <person name="Brooks K."/>
            <person name="Chillingworth T."/>
            <person name="Connerton P."/>
            <person name="Cronin A."/>
            <person name="Davis P."/>
            <person name="Davies R.M."/>
            <person name="Dowd L."/>
            <person name="White N."/>
            <person name="Farrar J."/>
            <person name="Feltwell T."/>
            <person name="Hamlin N."/>
            <person name="Haque A."/>
            <person name="Hien T.T."/>
            <person name="Holroyd S."/>
            <person name="Jagels K."/>
            <person name="Krogh A."/>
            <person name="Larsen T.S."/>
            <person name="Leather S."/>
            <person name="Moule S."/>
            <person name="O'Gaora P."/>
            <person name="Parry C."/>
            <person name="Quail M.A."/>
            <person name="Rutherford K.M."/>
            <person name="Simmonds M."/>
            <person name="Skelton J."/>
            <person name="Stevens K."/>
            <person name="Whitehead S."/>
            <person name="Barrell B.G."/>
        </authorList>
    </citation>
    <scope>NUCLEOTIDE SEQUENCE [LARGE SCALE GENOMIC DNA]</scope>
    <source>
        <strain>CT18</strain>
    </source>
</reference>
<reference key="2">
    <citation type="journal article" date="2003" name="J. Bacteriol.">
        <title>Comparative genomics of Salmonella enterica serovar Typhi strains Ty2 and CT18.</title>
        <authorList>
            <person name="Deng W."/>
            <person name="Liou S.-R."/>
            <person name="Plunkett G. III"/>
            <person name="Mayhew G.F."/>
            <person name="Rose D.J."/>
            <person name="Burland V."/>
            <person name="Kodoyianni V."/>
            <person name="Schwartz D.C."/>
            <person name="Blattner F.R."/>
        </authorList>
    </citation>
    <scope>NUCLEOTIDE SEQUENCE [LARGE SCALE GENOMIC DNA]</scope>
    <source>
        <strain>ATCC 700931 / Ty2</strain>
    </source>
</reference>
<evidence type="ECO:0000250" key="1"/>